<organism>
    <name type="scientific">Sus scrofa</name>
    <name type="common">Pig</name>
    <dbReference type="NCBI Taxonomy" id="9823"/>
    <lineage>
        <taxon>Eukaryota</taxon>
        <taxon>Metazoa</taxon>
        <taxon>Chordata</taxon>
        <taxon>Craniata</taxon>
        <taxon>Vertebrata</taxon>
        <taxon>Euteleostomi</taxon>
        <taxon>Mammalia</taxon>
        <taxon>Eutheria</taxon>
        <taxon>Laurasiatheria</taxon>
        <taxon>Artiodactyla</taxon>
        <taxon>Suina</taxon>
        <taxon>Suidae</taxon>
        <taxon>Sus</taxon>
    </lineage>
</organism>
<keyword id="KW-1015">Disulfide bond</keyword>
<keyword id="KW-0256">Endoplasmic reticulum</keyword>
<keyword id="KW-0333">Golgi apparatus</keyword>
<keyword id="KW-0445">Lipid transport</keyword>
<keyword id="KW-0446">Lipid-binding</keyword>
<keyword id="KW-1185">Reference proteome</keyword>
<keyword id="KW-0732">Signal</keyword>
<keyword id="KW-0813">Transport</keyword>
<protein>
    <recommendedName>
        <fullName>Microsomal triglyceride transfer protein large subunit</fullName>
    </recommendedName>
</protein>
<sequence length="894" mass="99771">MILLAVLFLCFISSYSASVKGHTTGLSLNNDRLYKLKYSTEVFLDRGKGNLQDSVGYQISSNVDVVLLWRSPDGDDDQLIQITIKDVKVENVNQQRGEKSIFKGKKPPQIIRKENLEALQRPVLLHLIHGKVKEFYSYQNEPPAIQNLKRGLASLFQMQLSSGTTNEVDISGDCKVTYQAHQDKVTKIKALDSCTIERSGFTTRNQVLGVTSKATSVTTYKIEDSFVVAVLAEEIHALRLNFLQTIAGKIVSKQKLELKTTEAGPRLKSGKQVAAIIKAVDSKYTAIPIVGQVFQSECKGCSSLSQHWQSVRKHLQPDNLSKTEAVRSFLTFIQHLRTAKKEEILQILKAENKDILPQLVDAVTSAQTPDSLDAILDFLDFKSDSNIILQERFLYACGFASHPDEELLRALISKFKGSFGSNDIRESVMIIIGALVRKLCQNEGCKLKAVVDAKKLILGGLERAEKKEDTMMYLLALKNARLPEGIPLLLKYAEAAEGPISHLAVTTLQRYDAPFITDEVKKTMNRIYHQTRKVHEKTVRTTAAAVILNNNPSYMEVKNILLSIGELPKEMNKYMLSIVQDILRFEMPASKMVRRVLKEMVAHNYDRFSKSGSSSAYTGYIERGPHSASTYSLDILYSGSGILRRSNLNIFQYVGKTPLHAIQVVIEAQGLEALIAATPDEGEENLDSYAGLSPLLFDVQLRPVTFFNGYSDLMSKMLSASSDPISVVKGLILLIDHSQELQLQSGLKANMEVQGGLAIDISGSMEFSLWYRESKTRVKNRVTVVITGDITVDSSFVKAGLEISAETEAGLEFISTVQFSQYPFLVCLQMDRDGIPYRQFETKYERLSTGRGYVSRKRKEILVAGSEFPLHQENSEMCKVVFAPEPESSSSGWF</sequence>
<accession>Q865F1</accession>
<comment type="function">
    <text evidence="1 2">Catalyzes the transport of triglyceride, cholesteryl ester, and phospholipid between phospholipid surfaces (By similarity). Required for the assembly and secretion of plasma lipoproteins that contain apolipoprotein B (By similarity). May be involved in regulating cholesteryl ester biosynthesis in cells that produce lipoproteins (By similarity).</text>
</comment>
<comment type="catalytic activity">
    <reaction evidence="2">
        <text>a 1,2-diacyl-sn-glycero-3-phosphocholine(in) = a 1,2-diacyl-sn-glycero-3-phosphocholine(out)</text>
        <dbReference type="Rhea" id="RHEA:38571"/>
        <dbReference type="ChEBI" id="CHEBI:57643"/>
    </reaction>
    <physiologicalReaction direction="left-to-right" evidence="2">
        <dbReference type="Rhea" id="RHEA:38572"/>
    </physiologicalReaction>
</comment>
<comment type="catalytic activity">
    <reaction evidence="2">
        <text>a 1,2-diacyl-sn-glycero-3-phosphoethanolamine(in) = a 1,2-diacyl-sn-glycero-3-phosphoethanolamine(out)</text>
        <dbReference type="Rhea" id="RHEA:38895"/>
        <dbReference type="ChEBI" id="CHEBI:64612"/>
    </reaction>
    <physiologicalReaction direction="left-to-right" evidence="2">
        <dbReference type="Rhea" id="RHEA:38896"/>
    </physiologicalReaction>
</comment>
<comment type="catalytic activity">
    <reaction evidence="2">
        <text>a cholesterol ester(in) = a cholesterol ester(out)</text>
        <dbReference type="Rhea" id="RHEA:39007"/>
        <dbReference type="ChEBI" id="CHEBI:17002"/>
    </reaction>
    <physiologicalReaction direction="left-to-right" evidence="2">
        <dbReference type="Rhea" id="RHEA:39008"/>
    </physiologicalReaction>
</comment>
<comment type="catalytic activity">
    <reaction evidence="2">
        <text>a triacyl-sn-glycerol(in) = a triacyl-sn-glycerol(out)</text>
        <dbReference type="Rhea" id="RHEA:39011"/>
        <dbReference type="ChEBI" id="CHEBI:64615"/>
    </reaction>
    <physiologicalReaction direction="left-to-right" evidence="2">
        <dbReference type="Rhea" id="RHEA:39012"/>
    </physiologicalReaction>
</comment>
<comment type="subunit">
    <text evidence="1 2">Heterodimer; heterodimerizes with the protein disulfide isomerase (P4HB/PDI). Interacts with APOB (By similarity). Interacts with PRAP1 (By similarity).</text>
</comment>
<comment type="subcellular location">
    <subcellularLocation>
        <location evidence="2">Endoplasmic reticulum</location>
    </subcellularLocation>
    <subcellularLocation>
        <location evidence="2">Golgi apparatus</location>
    </subcellularLocation>
    <text evidence="2">Colocalizes with P4HB/PDI in the endoplasmic reticulum.</text>
</comment>
<evidence type="ECO:0000250" key="1">
    <source>
        <dbReference type="UniProtKB" id="O08601"/>
    </source>
</evidence>
<evidence type="ECO:0000250" key="2">
    <source>
        <dbReference type="UniProtKB" id="P55157"/>
    </source>
</evidence>
<evidence type="ECO:0000255" key="3"/>
<evidence type="ECO:0000255" key="4">
    <source>
        <dbReference type="PROSITE-ProRule" id="PRU00557"/>
    </source>
</evidence>
<feature type="signal peptide" evidence="3">
    <location>
        <begin position="1"/>
        <end position="18"/>
    </location>
</feature>
<feature type="chain" id="PRO_0000041596" description="Microsomal triglyceride transfer protein large subunit">
    <location>
        <begin position="19"/>
        <end position="894"/>
    </location>
</feature>
<feature type="domain" description="Vitellogenin" evidence="4">
    <location>
        <begin position="28"/>
        <end position="662"/>
    </location>
</feature>
<feature type="disulfide bond" evidence="4">
    <location>
        <begin position="174"/>
        <end position="194"/>
    </location>
</feature>
<proteinExistence type="evidence at transcript level"/>
<dbReference type="EMBL" id="AY217034">
    <property type="protein sequence ID" value="AAO61497.1"/>
    <property type="molecule type" value="mRNA"/>
</dbReference>
<dbReference type="RefSeq" id="NP_999350.1">
    <property type="nucleotide sequence ID" value="NM_214185.1"/>
</dbReference>
<dbReference type="SMR" id="Q865F1"/>
<dbReference type="FunCoup" id="Q865F1">
    <property type="interactions" value="371"/>
</dbReference>
<dbReference type="STRING" id="9823.ENSSSCP00000009789"/>
<dbReference type="PaxDb" id="9823-ENSSSCP00000009789"/>
<dbReference type="PeptideAtlas" id="Q865F1"/>
<dbReference type="Ensembl" id="ENSSSCT00045051910.1">
    <property type="protein sequence ID" value="ENSSSCP00045036128.1"/>
    <property type="gene ID" value="ENSSSCG00045030426.1"/>
</dbReference>
<dbReference type="Ensembl" id="ENSSSCT00105050231">
    <property type="protein sequence ID" value="ENSSSCP00105035348"/>
    <property type="gene ID" value="ENSSSCG00105026432"/>
</dbReference>
<dbReference type="Ensembl" id="ENSSSCT00130046590">
    <property type="protein sequence ID" value="ENSSSCP00130032748"/>
    <property type="gene ID" value="ENSSSCG00130024088"/>
</dbReference>
<dbReference type="GeneID" id="397381"/>
<dbReference type="KEGG" id="ssc:397381"/>
<dbReference type="CTD" id="4547"/>
<dbReference type="eggNOG" id="KOG4337">
    <property type="taxonomic scope" value="Eukaryota"/>
</dbReference>
<dbReference type="InParanoid" id="Q865F1"/>
<dbReference type="OrthoDB" id="5865932at2759"/>
<dbReference type="Reactome" id="R-SSC-8866423">
    <property type="pathway name" value="VLDL assembly"/>
</dbReference>
<dbReference type="Reactome" id="R-SSC-8963888">
    <property type="pathway name" value="Chylomicron assembly"/>
</dbReference>
<dbReference type="Reactome" id="R-SSC-8964041">
    <property type="pathway name" value="LDL remodeling"/>
</dbReference>
<dbReference type="Proteomes" id="UP000008227">
    <property type="component" value="Unplaced"/>
</dbReference>
<dbReference type="Proteomes" id="UP000314985">
    <property type="component" value="Unplaced"/>
</dbReference>
<dbReference type="Proteomes" id="UP000694570">
    <property type="component" value="Unplaced"/>
</dbReference>
<dbReference type="Proteomes" id="UP000694571">
    <property type="component" value="Unplaced"/>
</dbReference>
<dbReference type="Proteomes" id="UP000694720">
    <property type="component" value="Unplaced"/>
</dbReference>
<dbReference type="Proteomes" id="UP000694722">
    <property type="component" value="Unplaced"/>
</dbReference>
<dbReference type="Proteomes" id="UP000694723">
    <property type="component" value="Unplaced"/>
</dbReference>
<dbReference type="Proteomes" id="UP000694724">
    <property type="component" value="Unplaced"/>
</dbReference>
<dbReference type="Proteomes" id="UP000694725">
    <property type="component" value="Unplaced"/>
</dbReference>
<dbReference type="Proteomes" id="UP000694726">
    <property type="component" value="Unplaced"/>
</dbReference>
<dbReference type="Proteomes" id="UP000694727">
    <property type="component" value="Unplaced"/>
</dbReference>
<dbReference type="Proteomes" id="UP000694728">
    <property type="component" value="Unplaced"/>
</dbReference>
<dbReference type="GO" id="GO:0016323">
    <property type="term" value="C:basolateral plasma membrane"/>
    <property type="evidence" value="ECO:0000318"/>
    <property type="project" value="GO_Central"/>
</dbReference>
<dbReference type="GO" id="GO:0005783">
    <property type="term" value="C:endoplasmic reticulum"/>
    <property type="evidence" value="ECO:0000250"/>
    <property type="project" value="UniProtKB"/>
</dbReference>
<dbReference type="GO" id="GO:0005794">
    <property type="term" value="C:Golgi apparatus"/>
    <property type="evidence" value="ECO:0000250"/>
    <property type="project" value="UniProtKB"/>
</dbReference>
<dbReference type="GO" id="GO:1902388">
    <property type="term" value="F:ceramide 1-phosphate transfer activity"/>
    <property type="evidence" value="ECO:0000250"/>
    <property type="project" value="UniProtKB"/>
</dbReference>
<dbReference type="GO" id="GO:0120020">
    <property type="term" value="F:cholesterol transfer activity"/>
    <property type="evidence" value="ECO:0000250"/>
    <property type="project" value="UniProtKB"/>
</dbReference>
<dbReference type="GO" id="GO:0008289">
    <property type="term" value="F:lipid binding"/>
    <property type="evidence" value="ECO:0007669"/>
    <property type="project" value="UniProtKB-KW"/>
</dbReference>
<dbReference type="GO" id="GO:0120019">
    <property type="term" value="F:phosphatidylcholine transfer activity"/>
    <property type="evidence" value="ECO:0000250"/>
    <property type="project" value="UniProtKB"/>
</dbReference>
<dbReference type="GO" id="GO:1904121">
    <property type="term" value="F:phosphatidylethanolamine transfer activity"/>
    <property type="evidence" value="ECO:0000250"/>
    <property type="project" value="UniProtKB"/>
</dbReference>
<dbReference type="GO" id="GO:0120014">
    <property type="term" value="F:phospholipid transfer activity"/>
    <property type="evidence" value="ECO:0000250"/>
    <property type="project" value="UniProtKB"/>
</dbReference>
<dbReference type="GO" id="GO:0005548">
    <property type="term" value="F:phospholipid transporter activity"/>
    <property type="evidence" value="ECO:0000318"/>
    <property type="project" value="GO_Central"/>
</dbReference>
<dbReference type="GO" id="GO:0046982">
    <property type="term" value="F:protein heterodimerization activity"/>
    <property type="evidence" value="ECO:0000250"/>
    <property type="project" value="UniProtKB"/>
</dbReference>
<dbReference type="GO" id="GO:0140344">
    <property type="term" value="F:triglyceride transfer activity"/>
    <property type="evidence" value="ECO:0000250"/>
    <property type="project" value="UniProtKB"/>
</dbReference>
<dbReference type="GO" id="GO:0042632">
    <property type="term" value="P:cholesterol homeostasis"/>
    <property type="evidence" value="ECO:0000318"/>
    <property type="project" value="GO_Central"/>
</dbReference>
<dbReference type="GO" id="GO:0042157">
    <property type="term" value="P:lipoprotein metabolic process"/>
    <property type="evidence" value="ECO:0000318"/>
    <property type="project" value="GO_Central"/>
</dbReference>
<dbReference type="GO" id="GO:0015914">
    <property type="term" value="P:phospholipid transport"/>
    <property type="evidence" value="ECO:0000250"/>
    <property type="project" value="UniProtKB"/>
</dbReference>
<dbReference type="GO" id="GO:0034377">
    <property type="term" value="P:plasma lipoprotein particle assembly"/>
    <property type="evidence" value="ECO:0000250"/>
    <property type="project" value="UniProtKB"/>
</dbReference>
<dbReference type="GO" id="GO:0009306">
    <property type="term" value="P:protein secretion"/>
    <property type="evidence" value="ECO:0000250"/>
    <property type="project" value="UniProtKB"/>
</dbReference>
<dbReference type="GO" id="GO:0034197">
    <property type="term" value="P:triglyceride transport"/>
    <property type="evidence" value="ECO:0000250"/>
    <property type="project" value="UniProtKB"/>
</dbReference>
<dbReference type="FunFam" id="2.30.230.10:FF:000001">
    <property type="entry name" value="Microsomal triglyceride transfer protein large subunit"/>
    <property type="match status" value="1"/>
</dbReference>
<dbReference type="FunFam" id="1.25.10.20:FF:000001">
    <property type="entry name" value="microsomal triglyceride transfer protein large subunit"/>
    <property type="match status" value="1"/>
</dbReference>
<dbReference type="Gene3D" id="2.30.230.10">
    <property type="entry name" value="Lipovitellin, beta-sheet shell regions, chain A"/>
    <property type="match status" value="1"/>
</dbReference>
<dbReference type="Gene3D" id="1.25.10.20">
    <property type="entry name" value="Vitellinogen, superhelical"/>
    <property type="match status" value="1"/>
</dbReference>
<dbReference type="InterPro" id="IPR015819">
    <property type="entry name" value="Lipid_transp_b-sht_shell"/>
</dbReference>
<dbReference type="InterPro" id="IPR011030">
    <property type="entry name" value="Lipovitellin_superhlx_dom"/>
</dbReference>
<dbReference type="InterPro" id="IPR045811">
    <property type="entry name" value="MTP_lip-bd"/>
</dbReference>
<dbReference type="InterPro" id="IPR039988">
    <property type="entry name" value="MTTP"/>
</dbReference>
<dbReference type="InterPro" id="IPR015816">
    <property type="entry name" value="Vitellinogen_b-sht_N"/>
</dbReference>
<dbReference type="InterPro" id="IPR001747">
    <property type="entry name" value="Vitellogenin_N"/>
</dbReference>
<dbReference type="PANTHER" id="PTHR13024:SF1">
    <property type="entry name" value="MICROSOMAL TRIGLYCERIDE TRANSFER PROTEIN LARGE SUBUNIT"/>
    <property type="match status" value="1"/>
</dbReference>
<dbReference type="PANTHER" id="PTHR13024">
    <property type="entry name" value="MICROSOMAL TRIGLYCERIDE TRANSFER PROTEIN, LARGE SUBUNIT"/>
    <property type="match status" value="1"/>
</dbReference>
<dbReference type="Pfam" id="PF19444">
    <property type="entry name" value="MTP_lip_bd"/>
    <property type="match status" value="1"/>
</dbReference>
<dbReference type="Pfam" id="PF01347">
    <property type="entry name" value="Vitellogenin_N"/>
    <property type="match status" value="1"/>
</dbReference>
<dbReference type="SMART" id="SM00638">
    <property type="entry name" value="LPD_N"/>
    <property type="match status" value="1"/>
</dbReference>
<dbReference type="SUPFAM" id="SSF56968">
    <property type="entry name" value="Lipovitellin-phosvitin complex, beta-sheet shell regions"/>
    <property type="match status" value="1"/>
</dbReference>
<dbReference type="SUPFAM" id="SSF48431">
    <property type="entry name" value="Lipovitellin-phosvitin complex, superhelical domain"/>
    <property type="match status" value="1"/>
</dbReference>
<dbReference type="PROSITE" id="PS51211">
    <property type="entry name" value="VITELLOGENIN"/>
    <property type="match status" value="1"/>
</dbReference>
<reference key="1">
    <citation type="journal article" date="2002" name="J. Lipid Res.">
        <title>Regulation of MTP expression in developing swine.</title>
        <authorList>
            <person name="Lu S."/>
            <person name="Huffman M."/>
            <person name="Yao Y."/>
            <person name="Mansbach C.M."/>
            <person name="Cheng X."/>
            <person name="Meng S."/>
            <person name="Black D.D."/>
        </authorList>
    </citation>
    <scope>NUCLEOTIDE SEQUENCE [MRNA]</scope>
    <source>
        <tissue>Small intestine</tissue>
    </source>
</reference>
<name>MTP_PIG</name>
<gene>
    <name type="primary">MTTP</name>
    <name type="synonym">MTP</name>
</gene>